<dbReference type="EMBL" id="AF222894">
    <property type="protein sequence ID" value="AAF30839.1"/>
    <property type="molecule type" value="Genomic_DNA"/>
</dbReference>
<dbReference type="RefSeq" id="WP_010891768.1">
    <property type="nucleotide sequence ID" value="NC_002162.1"/>
</dbReference>
<dbReference type="SMR" id="Q9PQ61"/>
<dbReference type="STRING" id="273119.UU427"/>
<dbReference type="EnsemblBacteria" id="AAF30839">
    <property type="protein sequence ID" value="AAF30839"/>
    <property type="gene ID" value="UU427"/>
</dbReference>
<dbReference type="GeneID" id="29672293"/>
<dbReference type="KEGG" id="uur:UU427"/>
<dbReference type="PATRIC" id="fig|273119.6.peg.443"/>
<dbReference type="eggNOG" id="COG1528">
    <property type="taxonomic scope" value="Bacteria"/>
</dbReference>
<dbReference type="HOGENOM" id="CLU_1569986_0_0_14"/>
<dbReference type="OrthoDB" id="404013at2"/>
<dbReference type="Proteomes" id="UP000000423">
    <property type="component" value="Chromosome"/>
</dbReference>
<dbReference type="GO" id="GO:0008199">
    <property type="term" value="F:ferric iron binding"/>
    <property type="evidence" value="ECO:0007669"/>
    <property type="project" value="InterPro"/>
</dbReference>
<dbReference type="Gene3D" id="1.20.1260.10">
    <property type="match status" value="1"/>
</dbReference>
<dbReference type="InterPro" id="IPR012347">
    <property type="entry name" value="Ferritin-like"/>
</dbReference>
<dbReference type="InterPro" id="IPR009040">
    <property type="entry name" value="Ferritin-like_diiron"/>
</dbReference>
<dbReference type="InterPro" id="IPR009078">
    <property type="entry name" value="Ferritin-like_SF"/>
</dbReference>
<dbReference type="InterPro" id="IPR008331">
    <property type="entry name" value="Ferritin_DPS_dom"/>
</dbReference>
<dbReference type="Pfam" id="PF00210">
    <property type="entry name" value="Ferritin"/>
    <property type="match status" value="1"/>
</dbReference>
<dbReference type="SUPFAM" id="SSF47240">
    <property type="entry name" value="Ferritin-like"/>
    <property type="match status" value="1"/>
</dbReference>
<dbReference type="PROSITE" id="PS50905">
    <property type="entry name" value="FERRITIN_LIKE"/>
    <property type="match status" value="1"/>
</dbReference>
<reference key="1">
    <citation type="journal article" date="2000" name="Nature">
        <title>The complete sequence of the mucosal pathogen Ureaplasma urealyticum.</title>
        <authorList>
            <person name="Glass J.I."/>
            <person name="Lefkowitz E.J."/>
            <person name="Glass J.S."/>
            <person name="Heiner C.R."/>
            <person name="Chen E.Y."/>
            <person name="Cassell G.H."/>
        </authorList>
    </citation>
    <scope>NUCLEOTIDE SEQUENCE [LARGE SCALE GENOMIC DNA]</scope>
    <source>
        <strain>ATCC 700970</strain>
    </source>
</reference>
<organism>
    <name type="scientific">Ureaplasma parvum serovar 3 (strain ATCC 700970)</name>
    <dbReference type="NCBI Taxonomy" id="273119"/>
    <lineage>
        <taxon>Bacteria</taxon>
        <taxon>Bacillati</taxon>
        <taxon>Mycoplasmatota</taxon>
        <taxon>Mycoplasmoidales</taxon>
        <taxon>Mycoplasmoidaceae</taxon>
        <taxon>Ureaplasma</taxon>
    </lineage>
</organism>
<name>Y427_UREPA</name>
<sequence>MVKSQKVIDVLNTHYNLNLELGSIYAQYAHIADDQFSMPFLAKFIADLSNDKLGVHKNLISEYARKVEIPLHTKFSVDVNFKPANPKELIKHILDTELKVRKHVANMAKVCLEENDFETFSFVKWFVDDGIKDFDDVRTIHDFFENATNNLQVEYAIRKYLKQMKVEEEK</sequence>
<evidence type="ECO:0000255" key="1">
    <source>
        <dbReference type="PROSITE-ProRule" id="PRU00085"/>
    </source>
</evidence>
<accession>Q9PQ61</accession>
<protein>
    <recommendedName>
        <fullName>Uncharacterized protein UU427</fullName>
    </recommendedName>
</protein>
<feature type="chain" id="PRO_0000135069" description="Uncharacterized protein UU427">
    <location>
        <begin position="1"/>
        <end position="170"/>
    </location>
</feature>
<feature type="domain" description="Ferritin-like diiron" evidence="1">
    <location>
        <begin position="1"/>
        <end position="148"/>
    </location>
</feature>
<proteinExistence type="predicted"/>
<keyword id="KW-0408">Iron</keyword>
<keyword id="KW-1185">Reference proteome</keyword>
<gene>
    <name type="ordered locus">UU427</name>
</gene>